<dbReference type="EMBL" id="AE013599">
    <property type="protein sequence ID" value="AAF57427.1"/>
    <property type="molecule type" value="Genomic_DNA"/>
</dbReference>
<dbReference type="RefSeq" id="NP_523798.1">
    <property type="nucleotide sequence ID" value="NM_079074.1"/>
</dbReference>
<dbReference type="SMR" id="Q9V969"/>
<dbReference type="FunCoup" id="Q9V969">
    <property type="interactions" value="14"/>
</dbReference>
<dbReference type="STRING" id="7227.FBpp0085554"/>
<dbReference type="GlyCosmos" id="Q9V969">
    <property type="glycosylation" value="1 site, No reported glycans"/>
</dbReference>
<dbReference type="GlyGen" id="Q9V969">
    <property type="glycosylation" value="1 site"/>
</dbReference>
<dbReference type="PaxDb" id="7227-FBpp0085554"/>
<dbReference type="EnsemblMetazoa" id="FBtr0086241">
    <property type="protein sequence ID" value="FBpp0085554"/>
    <property type="gene ID" value="FBgn0041240"/>
</dbReference>
<dbReference type="GeneID" id="37347"/>
<dbReference type="KEGG" id="dme:Dmel_CG13441"/>
<dbReference type="AGR" id="FB:FBgn0041240"/>
<dbReference type="CTD" id="37347"/>
<dbReference type="FlyBase" id="FBgn0041240">
    <property type="gene designation" value="Gr57a"/>
</dbReference>
<dbReference type="VEuPathDB" id="VectorBase:FBgn0041240"/>
<dbReference type="eggNOG" id="ENOG502TAY0">
    <property type="taxonomic scope" value="Eukaryota"/>
</dbReference>
<dbReference type="HOGENOM" id="CLU_644467_0_0_1"/>
<dbReference type="InParanoid" id="Q9V969"/>
<dbReference type="OMA" id="FYCDRTI"/>
<dbReference type="OrthoDB" id="8006662at2759"/>
<dbReference type="PhylomeDB" id="Q9V969"/>
<dbReference type="BioGRID-ORCS" id="37347">
    <property type="hits" value="0 hits in 1 CRISPR screen"/>
</dbReference>
<dbReference type="GenomeRNAi" id="37347"/>
<dbReference type="PRO" id="PR:Q9V969"/>
<dbReference type="Proteomes" id="UP000000803">
    <property type="component" value="Chromosome 2R"/>
</dbReference>
<dbReference type="GO" id="GO:0030424">
    <property type="term" value="C:axon"/>
    <property type="evidence" value="ECO:0000318"/>
    <property type="project" value="GO_Central"/>
</dbReference>
<dbReference type="GO" id="GO:0030425">
    <property type="term" value="C:dendrite"/>
    <property type="evidence" value="ECO:0000318"/>
    <property type="project" value="GO_Central"/>
</dbReference>
<dbReference type="GO" id="GO:0016020">
    <property type="term" value="C:membrane"/>
    <property type="evidence" value="ECO:0000303"/>
    <property type="project" value="UniProtKB"/>
</dbReference>
<dbReference type="GO" id="GO:0043025">
    <property type="term" value="C:neuronal cell body"/>
    <property type="evidence" value="ECO:0000318"/>
    <property type="project" value="GO_Central"/>
</dbReference>
<dbReference type="GO" id="GO:0005886">
    <property type="term" value="C:plasma membrane"/>
    <property type="evidence" value="ECO:0000250"/>
    <property type="project" value="FlyBase"/>
</dbReference>
<dbReference type="GO" id="GO:0015276">
    <property type="term" value="F:ligand-gated monoatomic ion channel activity"/>
    <property type="evidence" value="ECO:0000250"/>
    <property type="project" value="FlyBase"/>
</dbReference>
<dbReference type="GO" id="GO:0008527">
    <property type="term" value="F:taste receptor activity"/>
    <property type="evidence" value="ECO:0000303"/>
    <property type="project" value="UniProtKB"/>
</dbReference>
<dbReference type="GO" id="GO:0007635">
    <property type="term" value="P:chemosensory behavior"/>
    <property type="evidence" value="ECO:0000318"/>
    <property type="project" value="GO_Central"/>
</dbReference>
<dbReference type="GO" id="GO:0008049">
    <property type="term" value="P:male courtship behavior"/>
    <property type="evidence" value="ECO:0000318"/>
    <property type="project" value="GO_Central"/>
</dbReference>
<dbReference type="GO" id="GO:0034220">
    <property type="term" value="P:monoatomic ion transmembrane transport"/>
    <property type="evidence" value="ECO:0000250"/>
    <property type="project" value="FlyBase"/>
</dbReference>
<dbReference type="GO" id="GO:0050909">
    <property type="term" value="P:sensory perception of taste"/>
    <property type="evidence" value="ECO:0000303"/>
    <property type="project" value="UniProtKB"/>
</dbReference>
<dbReference type="GO" id="GO:0007165">
    <property type="term" value="P:signal transduction"/>
    <property type="evidence" value="ECO:0007669"/>
    <property type="project" value="UniProtKB-KW"/>
</dbReference>
<dbReference type="InterPro" id="IPR013604">
    <property type="entry name" value="7TM_chemorcpt"/>
</dbReference>
<dbReference type="Pfam" id="PF08395">
    <property type="entry name" value="7tm_7"/>
    <property type="match status" value="1"/>
</dbReference>
<accession>Q9V969</accession>
<feature type="chain" id="PRO_0000216517" description="Putative gustatory receptor 57a">
    <location>
        <begin position="1"/>
        <end position="416"/>
    </location>
</feature>
<feature type="topological domain" description="Cytoplasmic" evidence="1">
    <location>
        <begin position="1"/>
        <end position="13"/>
    </location>
</feature>
<feature type="transmembrane region" description="Helical; Name=1" evidence="2">
    <location>
        <begin position="14"/>
        <end position="34"/>
    </location>
</feature>
<feature type="topological domain" description="Extracellular" evidence="1">
    <location>
        <begin position="35"/>
        <end position="48"/>
    </location>
</feature>
<feature type="transmembrane region" description="Helical; Name=2" evidence="2">
    <location>
        <begin position="49"/>
        <end position="69"/>
    </location>
</feature>
<feature type="topological domain" description="Cytoplasmic" evidence="1">
    <location>
        <begin position="70"/>
        <end position="83"/>
    </location>
</feature>
<feature type="transmembrane region" description="Helical; Name=3" evidence="2">
    <location>
        <begin position="84"/>
        <end position="104"/>
    </location>
</feature>
<feature type="topological domain" description="Extracellular" evidence="1">
    <location>
        <begin position="105"/>
        <end position="143"/>
    </location>
</feature>
<feature type="transmembrane region" description="Helical; Name=4" evidence="2">
    <location>
        <begin position="144"/>
        <end position="164"/>
    </location>
</feature>
<feature type="topological domain" description="Cytoplasmic" evidence="1">
    <location>
        <begin position="165"/>
        <end position="171"/>
    </location>
</feature>
<feature type="transmembrane region" description="Helical; Name=5" evidence="2">
    <location>
        <begin position="172"/>
        <end position="192"/>
    </location>
</feature>
<feature type="topological domain" description="Extracellular" evidence="1">
    <location>
        <begin position="193"/>
        <end position="295"/>
    </location>
</feature>
<feature type="transmembrane region" description="Helical; Name=6" evidence="2">
    <location>
        <begin position="296"/>
        <end position="316"/>
    </location>
</feature>
<feature type="topological domain" description="Cytoplasmic" evidence="1">
    <location>
        <begin position="317"/>
        <end position="374"/>
    </location>
</feature>
<feature type="transmembrane region" description="Helical; Name=7" evidence="2">
    <location>
        <begin position="375"/>
        <end position="395"/>
    </location>
</feature>
<feature type="topological domain" description="Extracellular" evidence="1">
    <location>
        <begin position="396"/>
        <end position="416"/>
    </location>
</feature>
<feature type="glycosylation site" description="N-linked (GlcNAc...) asparagine" evidence="2">
    <location>
        <position position="290"/>
    </location>
</feature>
<evidence type="ECO:0000250" key="1"/>
<evidence type="ECO:0000255" key="2"/>
<evidence type="ECO:0000269" key="3">
    <source>
    </source>
</evidence>
<evidence type="ECO:0000269" key="4">
    <source>
    </source>
</evidence>
<evidence type="ECO:0000305" key="5"/>
<comment type="function">
    <text evidence="1">Probable gustatory receptor which mediates acceptance or avoidance behavior, depending on its substrates.</text>
</comment>
<comment type="subcellular location">
    <subcellularLocation>
        <location evidence="1">Cell membrane</location>
        <topology evidence="1">Multi-pass membrane protein</topology>
    </subcellularLocation>
</comment>
<comment type="tissue specificity">
    <text evidence="4">In larvae, is expressed in neurons of the terminal external chemosensory organ as well as in the dorsal pharyngeal sense organ.</text>
</comment>
<comment type="similarity">
    <text evidence="5">Belongs to the insect chemoreceptor superfamily. Gustatory receptor (GR) family. Gr57a subfamily.</text>
</comment>
<keyword id="KW-1003">Cell membrane</keyword>
<keyword id="KW-0325">Glycoprotein</keyword>
<keyword id="KW-0472">Membrane</keyword>
<keyword id="KW-0675">Receptor</keyword>
<keyword id="KW-1185">Reference proteome</keyword>
<keyword id="KW-0807">Transducer</keyword>
<keyword id="KW-0812">Transmembrane</keyword>
<keyword id="KW-1133">Transmembrane helix</keyword>
<protein>
    <recommendedName>
        <fullName>Putative gustatory receptor 57a</fullName>
    </recommendedName>
</protein>
<sequence>MAVLYFFREPETVFDCAAFICILQFLMGCNGFGIRRSTFRISWASRIYSMSVAIAAFCCLFGSLSVLLAEEDIRERLAKADNLVLSISALELLMSTLVFGVTVISLQVFARRHLGIYQRLAALDARLMSDFGANLNYRKMLRKNIAVLGIVTTIYLMAINSAAVQVASGHRALFLLFALCYTIVTGGPHFTGYVHMTLAEMLGIRFRLLQQLLQPEFLNWRFPQLHVQELRIRQVVSMIQELHYLIQEINRVYALSLWAAMAHDLAMSTSELYILFGQSVGIGQQNEEENGSCYRMLGYLALVMIPPLYKLLIAPFYCDRTIYEARRCLRLVEKLDDWFPQKSSLRPLVESLMSWRIQAKIQFTSGLDVVLSRKVIGLFTSILVNYLLILIQFAMTQKMGEQIEQQKIALQEWIGF</sequence>
<name>GR57A_DROME</name>
<proteinExistence type="evidence at transcript level"/>
<organism>
    <name type="scientific">Drosophila melanogaster</name>
    <name type="common">Fruit fly</name>
    <dbReference type="NCBI Taxonomy" id="7227"/>
    <lineage>
        <taxon>Eukaryota</taxon>
        <taxon>Metazoa</taxon>
        <taxon>Ecdysozoa</taxon>
        <taxon>Arthropoda</taxon>
        <taxon>Hexapoda</taxon>
        <taxon>Insecta</taxon>
        <taxon>Pterygota</taxon>
        <taxon>Neoptera</taxon>
        <taxon>Endopterygota</taxon>
        <taxon>Diptera</taxon>
        <taxon>Brachycera</taxon>
        <taxon>Muscomorpha</taxon>
        <taxon>Ephydroidea</taxon>
        <taxon>Drosophilidae</taxon>
        <taxon>Drosophila</taxon>
        <taxon>Sophophora</taxon>
    </lineage>
</organism>
<gene>
    <name type="primary">Gr57a</name>
    <name type="synonym">GR57B.1</name>
    <name type="ORF">CG13441</name>
</gene>
<reference evidence="5" key="1">
    <citation type="journal article" date="2000" name="Science">
        <title>The genome sequence of Drosophila melanogaster.</title>
        <authorList>
            <person name="Adams M.D."/>
            <person name="Celniker S.E."/>
            <person name="Holt R.A."/>
            <person name="Evans C.A."/>
            <person name="Gocayne J.D."/>
            <person name="Amanatides P.G."/>
            <person name="Scherer S.E."/>
            <person name="Li P.W."/>
            <person name="Hoskins R.A."/>
            <person name="Galle R.F."/>
            <person name="George R.A."/>
            <person name="Lewis S.E."/>
            <person name="Richards S."/>
            <person name="Ashburner M."/>
            <person name="Henderson S.N."/>
            <person name="Sutton G.G."/>
            <person name="Wortman J.R."/>
            <person name="Yandell M.D."/>
            <person name="Zhang Q."/>
            <person name="Chen L.X."/>
            <person name="Brandon R.C."/>
            <person name="Rogers Y.-H.C."/>
            <person name="Blazej R.G."/>
            <person name="Champe M."/>
            <person name="Pfeiffer B.D."/>
            <person name="Wan K.H."/>
            <person name="Doyle C."/>
            <person name="Baxter E.G."/>
            <person name="Helt G."/>
            <person name="Nelson C.R."/>
            <person name="Miklos G.L.G."/>
            <person name="Abril J.F."/>
            <person name="Agbayani A."/>
            <person name="An H.-J."/>
            <person name="Andrews-Pfannkoch C."/>
            <person name="Baldwin D."/>
            <person name="Ballew R.M."/>
            <person name="Basu A."/>
            <person name="Baxendale J."/>
            <person name="Bayraktaroglu L."/>
            <person name="Beasley E.M."/>
            <person name="Beeson K.Y."/>
            <person name="Benos P.V."/>
            <person name="Berman B.P."/>
            <person name="Bhandari D."/>
            <person name="Bolshakov S."/>
            <person name="Borkova D."/>
            <person name="Botchan M.R."/>
            <person name="Bouck J."/>
            <person name="Brokstein P."/>
            <person name="Brottier P."/>
            <person name="Burtis K.C."/>
            <person name="Busam D.A."/>
            <person name="Butler H."/>
            <person name="Cadieu E."/>
            <person name="Center A."/>
            <person name="Chandra I."/>
            <person name="Cherry J.M."/>
            <person name="Cawley S."/>
            <person name="Dahlke C."/>
            <person name="Davenport L.B."/>
            <person name="Davies P."/>
            <person name="de Pablos B."/>
            <person name="Delcher A."/>
            <person name="Deng Z."/>
            <person name="Mays A.D."/>
            <person name="Dew I."/>
            <person name="Dietz S.M."/>
            <person name="Dodson K."/>
            <person name="Doup L.E."/>
            <person name="Downes M."/>
            <person name="Dugan-Rocha S."/>
            <person name="Dunkov B.C."/>
            <person name="Dunn P."/>
            <person name="Durbin K.J."/>
            <person name="Evangelista C.C."/>
            <person name="Ferraz C."/>
            <person name="Ferriera S."/>
            <person name="Fleischmann W."/>
            <person name="Fosler C."/>
            <person name="Gabrielian A.E."/>
            <person name="Garg N.S."/>
            <person name="Gelbart W.M."/>
            <person name="Glasser K."/>
            <person name="Glodek A."/>
            <person name="Gong F."/>
            <person name="Gorrell J.H."/>
            <person name="Gu Z."/>
            <person name="Guan P."/>
            <person name="Harris M."/>
            <person name="Harris N.L."/>
            <person name="Harvey D.A."/>
            <person name="Heiman T.J."/>
            <person name="Hernandez J.R."/>
            <person name="Houck J."/>
            <person name="Hostin D."/>
            <person name="Houston K.A."/>
            <person name="Howland T.J."/>
            <person name="Wei M.-H."/>
            <person name="Ibegwam C."/>
            <person name="Jalali M."/>
            <person name="Kalush F."/>
            <person name="Karpen G.H."/>
            <person name="Ke Z."/>
            <person name="Kennison J.A."/>
            <person name="Ketchum K.A."/>
            <person name="Kimmel B.E."/>
            <person name="Kodira C.D."/>
            <person name="Kraft C.L."/>
            <person name="Kravitz S."/>
            <person name="Kulp D."/>
            <person name="Lai Z."/>
            <person name="Lasko P."/>
            <person name="Lei Y."/>
            <person name="Levitsky A.A."/>
            <person name="Li J.H."/>
            <person name="Li Z."/>
            <person name="Liang Y."/>
            <person name="Lin X."/>
            <person name="Liu X."/>
            <person name="Mattei B."/>
            <person name="McIntosh T.C."/>
            <person name="McLeod M.P."/>
            <person name="McPherson D."/>
            <person name="Merkulov G."/>
            <person name="Milshina N.V."/>
            <person name="Mobarry C."/>
            <person name="Morris J."/>
            <person name="Moshrefi A."/>
            <person name="Mount S.M."/>
            <person name="Moy M."/>
            <person name="Murphy B."/>
            <person name="Murphy L."/>
            <person name="Muzny D.M."/>
            <person name="Nelson D.L."/>
            <person name="Nelson D.R."/>
            <person name="Nelson K.A."/>
            <person name="Nixon K."/>
            <person name="Nusskern D.R."/>
            <person name="Pacleb J.M."/>
            <person name="Palazzolo M."/>
            <person name="Pittman G.S."/>
            <person name="Pan S."/>
            <person name="Pollard J."/>
            <person name="Puri V."/>
            <person name="Reese M.G."/>
            <person name="Reinert K."/>
            <person name="Remington K."/>
            <person name="Saunders R.D.C."/>
            <person name="Scheeler F."/>
            <person name="Shen H."/>
            <person name="Shue B.C."/>
            <person name="Siden-Kiamos I."/>
            <person name="Simpson M."/>
            <person name="Skupski M.P."/>
            <person name="Smith T.J."/>
            <person name="Spier E."/>
            <person name="Spradling A.C."/>
            <person name="Stapleton M."/>
            <person name="Strong R."/>
            <person name="Sun E."/>
            <person name="Svirskas R."/>
            <person name="Tector C."/>
            <person name="Turner R."/>
            <person name="Venter E."/>
            <person name="Wang A.H."/>
            <person name="Wang X."/>
            <person name="Wang Z.-Y."/>
            <person name="Wassarman D.A."/>
            <person name="Weinstock G.M."/>
            <person name="Weissenbach J."/>
            <person name="Williams S.M."/>
            <person name="Woodage T."/>
            <person name="Worley K.C."/>
            <person name="Wu D."/>
            <person name="Yang S."/>
            <person name="Yao Q.A."/>
            <person name="Ye J."/>
            <person name="Yeh R.-F."/>
            <person name="Zaveri J.S."/>
            <person name="Zhan M."/>
            <person name="Zhang G."/>
            <person name="Zhao Q."/>
            <person name="Zheng L."/>
            <person name="Zheng X.H."/>
            <person name="Zhong F.N."/>
            <person name="Zhong W."/>
            <person name="Zhou X."/>
            <person name="Zhu S.C."/>
            <person name="Zhu X."/>
            <person name="Smith H.O."/>
            <person name="Gibbs R.A."/>
            <person name="Myers E.W."/>
            <person name="Rubin G.M."/>
            <person name="Venter J.C."/>
        </authorList>
    </citation>
    <scope>NUCLEOTIDE SEQUENCE [LARGE SCALE GENOMIC DNA]</scope>
    <source>
        <strain evidence="3">Berkeley</strain>
    </source>
</reference>
<reference key="2">
    <citation type="journal article" date="2002" name="Genome Biol.">
        <title>Annotation of the Drosophila melanogaster euchromatic genome: a systematic review.</title>
        <authorList>
            <person name="Misra S."/>
            <person name="Crosby M.A."/>
            <person name="Mungall C.J."/>
            <person name="Matthews B.B."/>
            <person name="Campbell K.S."/>
            <person name="Hradecky P."/>
            <person name="Huang Y."/>
            <person name="Kaminker J.S."/>
            <person name="Millburn G.H."/>
            <person name="Prochnik S.E."/>
            <person name="Smith C.D."/>
            <person name="Tupy J.L."/>
            <person name="Whitfield E.J."/>
            <person name="Bayraktaroglu L."/>
            <person name="Berman B.P."/>
            <person name="Bettencourt B.R."/>
            <person name="Celniker S.E."/>
            <person name="de Grey A.D.N.J."/>
            <person name="Drysdale R.A."/>
            <person name="Harris N.L."/>
            <person name="Richter J."/>
            <person name="Russo S."/>
            <person name="Schroeder A.J."/>
            <person name="Shu S.Q."/>
            <person name="Stapleton M."/>
            <person name="Yamada C."/>
            <person name="Ashburner M."/>
            <person name="Gelbart W.M."/>
            <person name="Rubin G.M."/>
            <person name="Lewis S.E."/>
        </authorList>
    </citation>
    <scope>GENOME REANNOTATION</scope>
    <source>
        <strain>Berkeley</strain>
    </source>
</reference>
<reference evidence="5" key="3">
    <citation type="journal article" date="2000" name="Science">
        <title>Candidate taste receptors in Drosophila.</title>
        <authorList>
            <person name="Clyne P.J."/>
            <person name="Warr C.G."/>
            <person name="Carlson J.R."/>
        </authorList>
    </citation>
    <scope>IDENTIFICATION</scope>
</reference>
<reference evidence="5" key="4">
    <citation type="journal article" date="2001" name="Curr. Biol.">
        <title>Spatially restricted expression of candidate taste receptors in the Drosophila gustatory system.</title>
        <authorList>
            <person name="Dunipace L."/>
            <person name="Meister S."/>
            <person name="McNealy C."/>
            <person name="Amrein H."/>
        </authorList>
    </citation>
    <scope>IDENTIFICATION</scope>
</reference>
<reference key="5">
    <citation type="journal article" date="2011" name="J. Neurosci.">
        <title>Molecular and cellular organization of the taste system in the Drosophila larva.</title>
        <authorList>
            <person name="Kwon J.Y."/>
            <person name="Dahanukar A."/>
            <person name="Weiss L.A."/>
            <person name="Carlson J.R."/>
        </authorList>
    </citation>
    <scope>TISSUE SPECIFICITY</scope>
</reference>